<name>Y5293_BACC2</name>
<organism>
    <name type="scientific">Bacillus cereus (strain G9842)</name>
    <dbReference type="NCBI Taxonomy" id="405531"/>
    <lineage>
        <taxon>Bacteria</taxon>
        <taxon>Bacillati</taxon>
        <taxon>Bacillota</taxon>
        <taxon>Bacilli</taxon>
        <taxon>Bacillales</taxon>
        <taxon>Bacillaceae</taxon>
        <taxon>Bacillus</taxon>
        <taxon>Bacillus cereus group</taxon>
    </lineage>
</organism>
<sequence>MMRGGMGNMNNMMKQMQKMQKDMAKAQEELGEKTVEGTAGGGMITVIANGHKQILEVKIKEEVVDPEDIEMLQDLVLAATNDALKKADELSNSTMGKFTKGLNLPGGMF</sequence>
<keyword id="KW-0963">Cytoplasm</keyword>
<keyword id="KW-0238">DNA-binding</keyword>
<proteinExistence type="inferred from homology"/>
<accession>B7IS38</accession>
<evidence type="ECO:0000255" key="1">
    <source>
        <dbReference type="HAMAP-Rule" id="MF_00274"/>
    </source>
</evidence>
<comment type="function">
    <text evidence="1">Binds to DNA and alters its conformation. May be involved in regulation of gene expression, nucleoid organization and DNA protection.</text>
</comment>
<comment type="subunit">
    <text evidence="1">Homodimer.</text>
</comment>
<comment type="subcellular location">
    <subcellularLocation>
        <location evidence="1">Cytoplasm</location>
        <location evidence="1">Nucleoid</location>
    </subcellularLocation>
</comment>
<comment type="similarity">
    <text evidence="1">Belongs to the YbaB/EbfC family.</text>
</comment>
<protein>
    <recommendedName>
        <fullName evidence="1">Nucleoid-associated protein BCG9842_B5293</fullName>
    </recommendedName>
</protein>
<dbReference type="EMBL" id="CP001186">
    <property type="protein sequence ID" value="ACK98125.1"/>
    <property type="molecule type" value="Genomic_DNA"/>
</dbReference>
<dbReference type="SMR" id="B7IS38"/>
<dbReference type="KEGG" id="bcg:BCG9842_B5293"/>
<dbReference type="HOGENOM" id="CLU_140930_1_0_9"/>
<dbReference type="Proteomes" id="UP000006744">
    <property type="component" value="Chromosome"/>
</dbReference>
<dbReference type="GO" id="GO:0043590">
    <property type="term" value="C:bacterial nucleoid"/>
    <property type="evidence" value="ECO:0007669"/>
    <property type="project" value="UniProtKB-UniRule"/>
</dbReference>
<dbReference type="GO" id="GO:0005829">
    <property type="term" value="C:cytosol"/>
    <property type="evidence" value="ECO:0007669"/>
    <property type="project" value="TreeGrafter"/>
</dbReference>
<dbReference type="GO" id="GO:0003677">
    <property type="term" value="F:DNA binding"/>
    <property type="evidence" value="ECO:0007669"/>
    <property type="project" value="UniProtKB-UniRule"/>
</dbReference>
<dbReference type="FunFam" id="3.30.1310.10:FF:000002">
    <property type="entry name" value="Nucleoid-associated protein IKC_06587"/>
    <property type="match status" value="1"/>
</dbReference>
<dbReference type="Gene3D" id="3.30.1310.10">
    <property type="entry name" value="Nucleoid-associated protein YbaB-like domain"/>
    <property type="match status" value="1"/>
</dbReference>
<dbReference type="HAMAP" id="MF_00274">
    <property type="entry name" value="DNA_YbaB_EbfC"/>
    <property type="match status" value="1"/>
</dbReference>
<dbReference type="InterPro" id="IPR036894">
    <property type="entry name" value="YbaB-like_sf"/>
</dbReference>
<dbReference type="InterPro" id="IPR004401">
    <property type="entry name" value="YbaB/EbfC"/>
</dbReference>
<dbReference type="NCBIfam" id="TIGR00103">
    <property type="entry name" value="DNA_YbaB_EbfC"/>
    <property type="match status" value="1"/>
</dbReference>
<dbReference type="PANTHER" id="PTHR33449">
    <property type="entry name" value="NUCLEOID-ASSOCIATED PROTEIN YBAB"/>
    <property type="match status" value="1"/>
</dbReference>
<dbReference type="PANTHER" id="PTHR33449:SF1">
    <property type="entry name" value="NUCLEOID-ASSOCIATED PROTEIN YBAB"/>
    <property type="match status" value="1"/>
</dbReference>
<dbReference type="Pfam" id="PF02575">
    <property type="entry name" value="YbaB_DNA_bd"/>
    <property type="match status" value="1"/>
</dbReference>
<dbReference type="PIRSF" id="PIRSF004555">
    <property type="entry name" value="UCP004555"/>
    <property type="match status" value="1"/>
</dbReference>
<dbReference type="SUPFAM" id="SSF82607">
    <property type="entry name" value="YbaB-like"/>
    <property type="match status" value="1"/>
</dbReference>
<gene>
    <name type="ordered locus">BCG9842_B5293</name>
</gene>
<reference key="1">
    <citation type="submission" date="2008-10" db="EMBL/GenBank/DDBJ databases">
        <title>Genome sequence of Bacillus cereus G9842.</title>
        <authorList>
            <person name="Dodson R.J."/>
            <person name="Durkin A.S."/>
            <person name="Rosovitz M.J."/>
            <person name="Rasko D.A."/>
            <person name="Hoffmaster A."/>
            <person name="Ravel J."/>
            <person name="Sutton G."/>
        </authorList>
    </citation>
    <scope>NUCLEOTIDE SEQUENCE [LARGE SCALE GENOMIC DNA]</scope>
    <source>
        <strain>G9842</strain>
    </source>
</reference>
<feature type="chain" id="PRO_1000119310" description="Nucleoid-associated protein BCG9842_B5293">
    <location>
        <begin position="1"/>
        <end position="109"/>
    </location>
</feature>